<proteinExistence type="evidence at protein level"/>
<name>PDE7B_MOUSE</name>
<accession>Q9QXQ1</accession>
<accession>A1L3T2</accession>
<dbReference type="EC" id="3.1.4.53" evidence="6"/>
<dbReference type="EMBL" id="AF190639">
    <property type="protein sequence ID" value="AAF25195.1"/>
    <property type="molecule type" value="mRNA"/>
</dbReference>
<dbReference type="EMBL" id="AJ251859">
    <property type="protein sequence ID" value="CAB92530.1"/>
    <property type="molecule type" value="mRNA"/>
</dbReference>
<dbReference type="EMBL" id="BC130267">
    <property type="protein sequence ID" value="AAI30268.1"/>
    <property type="molecule type" value="mRNA"/>
</dbReference>
<dbReference type="CCDS" id="CCDS35859.1"/>
<dbReference type="RefSeq" id="NP_001334295.1">
    <property type="nucleotide sequence ID" value="NM_001347366.1"/>
</dbReference>
<dbReference type="RefSeq" id="NP_038903.3">
    <property type="nucleotide sequence ID" value="NM_013875.6"/>
</dbReference>
<dbReference type="SMR" id="Q9QXQ1"/>
<dbReference type="FunCoup" id="Q9QXQ1">
    <property type="interactions" value="133"/>
</dbReference>
<dbReference type="STRING" id="10090.ENSMUSP00000132378"/>
<dbReference type="GlyGen" id="Q9QXQ1">
    <property type="glycosylation" value="1 site, 1 N-linked glycan (1 site)"/>
</dbReference>
<dbReference type="iPTMnet" id="Q9QXQ1"/>
<dbReference type="PhosphoSitePlus" id="Q9QXQ1"/>
<dbReference type="PaxDb" id="10090-ENSMUSP00000020165"/>
<dbReference type="ProteomicsDB" id="287904"/>
<dbReference type="Antibodypedia" id="19754">
    <property type="antibodies" value="292 antibodies from 29 providers"/>
</dbReference>
<dbReference type="DNASU" id="29863"/>
<dbReference type="Ensembl" id="ENSMUST00000020165.14">
    <property type="protein sequence ID" value="ENSMUSP00000020165.8"/>
    <property type="gene ID" value="ENSMUSG00000019990.16"/>
</dbReference>
<dbReference type="GeneID" id="29863"/>
<dbReference type="KEGG" id="mmu:29863"/>
<dbReference type="UCSC" id="uc007eoa.2">
    <property type="organism name" value="mouse"/>
</dbReference>
<dbReference type="AGR" id="MGI:1352752"/>
<dbReference type="CTD" id="27115"/>
<dbReference type="MGI" id="MGI:1352752">
    <property type="gene designation" value="Pde7b"/>
</dbReference>
<dbReference type="VEuPathDB" id="HostDB:ENSMUSG00000019990"/>
<dbReference type="eggNOG" id="KOG3689">
    <property type="taxonomic scope" value="Eukaryota"/>
</dbReference>
<dbReference type="GeneTree" id="ENSGT00940000159413"/>
<dbReference type="InParanoid" id="Q9QXQ1"/>
<dbReference type="OMA" id="MVKLLWK"/>
<dbReference type="OrthoDB" id="189220at2759"/>
<dbReference type="PhylomeDB" id="Q9QXQ1"/>
<dbReference type="TreeFam" id="TF314638"/>
<dbReference type="BRENDA" id="3.1.4.53">
    <property type="organism ID" value="3474"/>
</dbReference>
<dbReference type="Reactome" id="R-MMU-418555">
    <property type="pathway name" value="G alpha (s) signalling events"/>
</dbReference>
<dbReference type="UniPathway" id="UPA00762">
    <property type="reaction ID" value="UER00747"/>
</dbReference>
<dbReference type="BioGRID-ORCS" id="29863">
    <property type="hits" value="0 hits in 78 CRISPR screens"/>
</dbReference>
<dbReference type="ChiTaRS" id="Pde7b">
    <property type="organism name" value="mouse"/>
</dbReference>
<dbReference type="PRO" id="PR:Q9QXQ1"/>
<dbReference type="Proteomes" id="UP000000589">
    <property type="component" value="Chromosome 10"/>
</dbReference>
<dbReference type="RNAct" id="Q9QXQ1">
    <property type="molecule type" value="protein"/>
</dbReference>
<dbReference type="Bgee" id="ENSMUSG00000019990">
    <property type="expression patterns" value="Expressed in caudate-putamen and 205 other cell types or tissues"/>
</dbReference>
<dbReference type="ExpressionAtlas" id="Q9QXQ1">
    <property type="expression patterns" value="baseline and differential"/>
</dbReference>
<dbReference type="GO" id="GO:0004115">
    <property type="term" value="F:3',5'-cyclic-AMP phosphodiesterase activity"/>
    <property type="evidence" value="ECO:0000314"/>
    <property type="project" value="MGI"/>
</dbReference>
<dbReference type="GO" id="GO:0046872">
    <property type="term" value="F:metal ion binding"/>
    <property type="evidence" value="ECO:0007669"/>
    <property type="project" value="UniProtKB-KW"/>
</dbReference>
<dbReference type="GO" id="GO:0006198">
    <property type="term" value="P:cAMP catabolic process"/>
    <property type="evidence" value="ECO:0007669"/>
    <property type="project" value="UniProtKB-UniPathway"/>
</dbReference>
<dbReference type="GO" id="GO:0007165">
    <property type="term" value="P:signal transduction"/>
    <property type="evidence" value="ECO:0007669"/>
    <property type="project" value="InterPro"/>
</dbReference>
<dbReference type="CDD" id="cd00077">
    <property type="entry name" value="HDc"/>
    <property type="match status" value="1"/>
</dbReference>
<dbReference type="FunFam" id="1.10.1300.10:FF:000004">
    <property type="entry name" value="Phosphodiesterase"/>
    <property type="match status" value="1"/>
</dbReference>
<dbReference type="Gene3D" id="1.10.1300.10">
    <property type="entry name" value="3'5'-cyclic nucleotide phosphodiesterase, catalytic domain"/>
    <property type="match status" value="1"/>
</dbReference>
<dbReference type="InterPro" id="IPR003607">
    <property type="entry name" value="HD/PDEase_dom"/>
</dbReference>
<dbReference type="InterPro" id="IPR023088">
    <property type="entry name" value="PDEase"/>
</dbReference>
<dbReference type="InterPro" id="IPR002073">
    <property type="entry name" value="PDEase_catalytic_dom"/>
</dbReference>
<dbReference type="InterPro" id="IPR036971">
    <property type="entry name" value="PDEase_catalytic_dom_sf"/>
</dbReference>
<dbReference type="InterPro" id="IPR023174">
    <property type="entry name" value="PDEase_CS"/>
</dbReference>
<dbReference type="PANTHER" id="PTHR11347">
    <property type="entry name" value="CYCLIC NUCLEOTIDE PHOSPHODIESTERASE"/>
    <property type="match status" value="1"/>
</dbReference>
<dbReference type="Pfam" id="PF00233">
    <property type="entry name" value="PDEase_I"/>
    <property type="match status" value="1"/>
</dbReference>
<dbReference type="PRINTS" id="PR00387">
    <property type="entry name" value="PDIESTERASE1"/>
</dbReference>
<dbReference type="SMART" id="SM00471">
    <property type="entry name" value="HDc"/>
    <property type="match status" value="1"/>
</dbReference>
<dbReference type="SUPFAM" id="SSF109604">
    <property type="entry name" value="HD-domain/PDEase-like"/>
    <property type="match status" value="1"/>
</dbReference>
<dbReference type="PROSITE" id="PS00126">
    <property type="entry name" value="PDEASE_I_1"/>
    <property type="match status" value="1"/>
</dbReference>
<dbReference type="PROSITE" id="PS51845">
    <property type="entry name" value="PDEASE_I_2"/>
    <property type="match status" value="1"/>
</dbReference>
<comment type="function">
    <text evidence="3 6">Hydrolyzes the second messenger cAMP, which is a key regulator of many important physiological processes (PubMed:10872825). May be involved in the control of cAMP-mediated neural activity and cAMP metabolism in the brain (By similarity).</text>
</comment>
<comment type="catalytic activity">
    <reaction evidence="6">
        <text>3',5'-cyclic AMP + H2O = AMP + H(+)</text>
        <dbReference type="Rhea" id="RHEA:25277"/>
        <dbReference type="ChEBI" id="CHEBI:15377"/>
        <dbReference type="ChEBI" id="CHEBI:15378"/>
        <dbReference type="ChEBI" id="CHEBI:58165"/>
        <dbReference type="ChEBI" id="CHEBI:456215"/>
        <dbReference type="EC" id="3.1.4.53"/>
    </reaction>
</comment>
<comment type="cofactor">
    <cofactor evidence="2">
        <name>a divalent metal cation</name>
        <dbReference type="ChEBI" id="CHEBI:60240"/>
    </cofactor>
    <text evidence="2">Binds 2 divalent metal cations per subunit (By similarity). Site 1 may preferentially bind zinc ions, while site 2 has a preference for magnesium and/or manganese ions (By similarity).</text>
</comment>
<comment type="activity regulation">
    <text evidence="6">Inhibited by dipyridamole, IBMX and SCH 51866. Insensitive to zaprinast, rolipram, and milrinone.</text>
</comment>
<comment type="biophysicochemical properties">
    <kinetics>
        <KM evidence="6">0.1 uM for 3',5'-cyclic AMP</KM>
    </kinetics>
</comment>
<comment type="pathway">
    <text evidence="9">Purine metabolism; 3',5'-cyclic AMP degradation; AMP from 3',5'-cyclic AMP: step 1/1.</text>
</comment>
<comment type="tissue specificity">
    <text evidence="6">Highly expressed in brain.</text>
</comment>
<comment type="domain">
    <text>Composed of a C-terminal catalytic domain containing two putative divalent metal sites and an N-terminal regulatory domain.</text>
</comment>
<comment type="similarity">
    <text evidence="8">Belongs to the cyclic nucleotide phosphodiesterase family. PDE7 subfamily.</text>
</comment>
<organism>
    <name type="scientific">Mus musculus</name>
    <name type="common">Mouse</name>
    <dbReference type="NCBI Taxonomy" id="10090"/>
    <lineage>
        <taxon>Eukaryota</taxon>
        <taxon>Metazoa</taxon>
        <taxon>Chordata</taxon>
        <taxon>Craniata</taxon>
        <taxon>Vertebrata</taxon>
        <taxon>Euteleostomi</taxon>
        <taxon>Mammalia</taxon>
        <taxon>Eutheria</taxon>
        <taxon>Euarchontoglires</taxon>
        <taxon>Glires</taxon>
        <taxon>Rodentia</taxon>
        <taxon>Myomorpha</taxon>
        <taxon>Muroidea</taxon>
        <taxon>Muridae</taxon>
        <taxon>Murinae</taxon>
        <taxon>Mus</taxon>
        <taxon>Mus</taxon>
    </lineage>
</organism>
<keyword id="KW-0114">cAMP</keyword>
<keyword id="KW-0378">Hydrolase</keyword>
<keyword id="KW-0479">Metal-binding</keyword>
<keyword id="KW-0597">Phosphoprotein</keyword>
<keyword id="KW-1185">Reference proteome</keyword>
<feature type="chain" id="PRO_0000198837" description="3',5'-cyclic-AMP phosphodiesterase 7B">
    <location>
        <begin position="1"/>
        <end position="446"/>
    </location>
</feature>
<feature type="domain" description="PDEase" evidence="4">
    <location>
        <begin position="97"/>
        <end position="420"/>
    </location>
</feature>
<feature type="region of interest" description="Disordered" evidence="5">
    <location>
        <begin position="422"/>
        <end position="446"/>
    </location>
</feature>
<feature type="active site" description="Proton donor" evidence="1">
    <location>
        <position position="173"/>
    </location>
</feature>
<feature type="binding site" evidence="2">
    <location>
        <position position="177"/>
    </location>
    <ligand>
        <name>a divalent metal cation</name>
        <dbReference type="ChEBI" id="CHEBI:60240"/>
        <label>1</label>
    </ligand>
</feature>
<feature type="binding site" evidence="2">
    <location>
        <position position="213"/>
    </location>
    <ligand>
        <name>a divalent metal cation</name>
        <dbReference type="ChEBI" id="CHEBI:60240"/>
        <label>1</label>
    </ligand>
</feature>
<feature type="binding site" evidence="2">
    <location>
        <position position="214"/>
    </location>
    <ligand>
        <name>a divalent metal cation</name>
        <dbReference type="ChEBI" id="CHEBI:60240"/>
        <label>1</label>
    </ligand>
</feature>
<feature type="binding site" evidence="2">
    <location>
        <position position="214"/>
    </location>
    <ligand>
        <name>a divalent metal cation</name>
        <dbReference type="ChEBI" id="CHEBI:60240"/>
        <label>2</label>
    </ligand>
</feature>
<feature type="binding site" evidence="2">
    <location>
        <position position="323"/>
    </location>
    <ligand>
        <name>a divalent metal cation</name>
        <dbReference type="ChEBI" id="CHEBI:60240"/>
        <label>1</label>
    </ligand>
</feature>
<feature type="modified residue" description="Phosphoserine" evidence="11">
    <location>
        <position position="426"/>
    </location>
</feature>
<feature type="modified residue" description="Phosphothreonine" evidence="11">
    <location>
        <position position="445"/>
    </location>
</feature>
<gene>
    <name evidence="7 10" type="primary">Pde7b</name>
</gene>
<evidence type="ECO:0000250" key="1">
    <source>
        <dbReference type="UniProtKB" id="O76083"/>
    </source>
</evidence>
<evidence type="ECO:0000250" key="2">
    <source>
        <dbReference type="UniProtKB" id="Q13946"/>
    </source>
</evidence>
<evidence type="ECO:0000250" key="3">
    <source>
        <dbReference type="UniProtKB" id="Q9NP56"/>
    </source>
</evidence>
<evidence type="ECO:0000255" key="4">
    <source>
        <dbReference type="PROSITE-ProRule" id="PRU01192"/>
    </source>
</evidence>
<evidence type="ECO:0000256" key="5">
    <source>
        <dbReference type="SAM" id="MobiDB-lite"/>
    </source>
</evidence>
<evidence type="ECO:0000269" key="6">
    <source>
    </source>
</evidence>
<evidence type="ECO:0000303" key="7">
    <source>
    </source>
</evidence>
<evidence type="ECO:0000305" key="8"/>
<evidence type="ECO:0000305" key="9">
    <source>
    </source>
</evidence>
<evidence type="ECO:0000312" key="10">
    <source>
        <dbReference type="MGI" id="MGI:1352752"/>
    </source>
</evidence>
<evidence type="ECO:0007744" key="11">
    <source>
    </source>
</evidence>
<reference key="1">
    <citation type="journal article" date="2000" name="Proc. Natl. Acad. Sci. U.S.A.">
        <title>Cloning and characterization of PDE7B, a cAMP-specific phosphodiesterase.</title>
        <authorList>
            <person name="Hetman J.M."/>
            <person name="Soderling S.H."/>
            <person name="Glavas N.A."/>
            <person name="Beavo J.A."/>
        </authorList>
    </citation>
    <scope>NUCLEOTIDE SEQUENCE [MRNA]</scope>
</reference>
<reference key="2">
    <citation type="journal article" date="2000" name="Biochem. Biophys. Res. Commun.">
        <title>Cloning and characterisation of the human and mouse PDE7B, a novel cAMP-specific nucleotide phosphodiesterase.</title>
        <authorList>
            <person name="Gardner C.E."/>
            <person name="Robas N.M."/>
            <person name="Cawkill D."/>
            <person name="Fidock M.D."/>
        </authorList>
    </citation>
    <scope>NUCLEOTIDE SEQUENCE [MRNA]</scope>
    <scope>TISSUE SPECIFICITY</scope>
    <scope>CATALYTIC ACTIVITY</scope>
    <scope>FUNCTION</scope>
    <scope>BIOPHYSICOCHEMICAL PROPERTIES</scope>
    <scope>ACTIVITY REGULATION</scope>
    <scope>PATHWAY</scope>
    <source>
        <strain>C57BL/6J</strain>
    </source>
</reference>
<reference key="3">
    <citation type="journal article" date="2004" name="Genome Res.">
        <title>The status, quality, and expansion of the NIH full-length cDNA project: the Mammalian Gene Collection (MGC).</title>
        <authorList>
            <consortium name="The MGC Project Team"/>
        </authorList>
    </citation>
    <scope>NUCLEOTIDE SEQUENCE [LARGE SCALE MRNA]</scope>
</reference>
<reference key="4">
    <citation type="journal article" date="2010" name="Cell">
        <title>A tissue-specific atlas of mouse protein phosphorylation and expression.</title>
        <authorList>
            <person name="Huttlin E.L."/>
            <person name="Jedrychowski M.P."/>
            <person name="Elias J.E."/>
            <person name="Goswami T."/>
            <person name="Rad R."/>
            <person name="Beausoleil S.A."/>
            <person name="Villen J."/>
            <person name="Haas W."/>
            <person name="Sowa M.E."/>
            <person name="Gygi S.P."/>
        </authorList>
    </citation>
    <scope>PHOSPHORYLATION [LARGE SCALE ANALYSIS] AT SER-426 AND THR-445</scope>
    <scope>IDENTIFICATION BY MASS SPECTROMETRY [LARGE SCALE ANALYSIS]</scope>
    <source>
        <tissue>Brain</tissue>
        <tissue>Brown adipose tissue</tissue>
        <tissue>Kidney</tissue>
        <tissue>Lung</tissue>
    </source>
</reference>
<sequence>MSCLMVERCGEVLFESPEQSVKCVCMLGDVRLRGQTGVPAERRGSYPFIDFRLLNNTTHSGEIGTKKKVKRLLSFQRYFHASRLLRGIIPQAPLHLLDEDYLGQARHMLSKVGTWDFDIFLFDRLTNGNSLVTLLCHLFNSHGLIHHFKLDMVTLHRFLVMVQEDYHGHNPYHNAVHAADVTQAMHCYLKEPKLASFLTPLDIMLGLLAAAAHDVDHPGVNQPFLIKTNHHLANLYQNMSVLENHHWRSTIGMLRESRLLAHLPKEMTQDIEQQLGSLILATDINRQNEFLTRLKAHLHNKDLRLENVQDRHFMLQIALKCADICNPCRIWEMSKQWSERVCEEFYRQGDLEQKFELEISPLCNQQKDSIPSIQIGFMTYIVEPLFREWARFTGNSTLSENMLSHLAHNKAQWKSLLSNQHRRRGSGQDLAGPAPETLEQTEGATP</sequence>
<protein>
    <recommendedName>
        <fullName evidence="8">3',5'-cyclic-AMP phosphodiesterase 7B</fullName>
        <ecNumber evidence="6">3.1.4.53</ecNumber>
    </recommendedName>
    <alternativeName>
        <fullName evidence="8">cAMP-specific phosphodiesterase 7B</fullName>
    </alternativeName>
</protein>